<sequence length="417" mass="44706">MDMHCKADPFSAMHPGHGGVNQLGGVFVNGRPLPDVVRQRIVELAHQGVRPCDISRQLRVSHGCVSKILGRYYETGSIKPGVIGGSKPKVATPKVVDKIAEYKRQNPTMFAWEIRDRLLAEGICDNDTVPSVSSINRIIRTKVQQPFHPTPDGAGTGVTAPGHTIVPSTASPPVSSASNDPVGSYSINGILGIPRSNGEKRKRDEVEVYTDPAHIRGGGGLHLVWTLRDVSEGSVPNGDSQSGVDSLRKHLRADTFTQQQLEALDRVFERPSYPDVFQASEHIKSEQGNEYSLPALTPGLDEVKSSLSASTNPELGSNVSGTQTYPVVTGRDMASTTLPGYPPHVPPTGQGSYPTSTLAGMVPGSEFSGNPYSHPQYTAYNEAWRFSNPALLSSPYYYSAAPRGSAPAAAAAAYDRH</sequence>
<keyword id="KW-0025">Alternative splicing</keyword>
<keyword id="KW-0217">Developmental protein</keyword>
<keyword id="KW-0221">Differentiation</keyword>
<keyword id="KW-0225">Disease variant</keyword>
<keyword id="KW-0238">DNA-binding</keyword>
<keyword id="KW-0539">Nucleus</keyword>
<keyword id="KW-0563">Paired box</keyword>
<keyword id="KW-0597">Phosphoprotein</keyword>
<keyword id="KW-1267">Proteomics identification</keyword>
<keyword id="KW-1185">Reference proteome</keyword>
<keyword id="KW-0804">Transcription</keyword>
<keyword id="KW-0805">Transcription regulation</keyword>
<protein>
    <recommendedName>
        <fullName>Paired box protein Pax-2</fullName>
    </recommendedName>
</protein>
<feature type="chain" id="PRO_0000050175" description="Paired box protein Pax-2">
    <location>
        <begin position="1"/>
        <end position="417"/>
    </location>
</feature>
<feature type="DNA-binding region" description="Paired" evidence="1">
    <location>
        <begin position="16"/>
        <end position="142"/>
    </location>
</feature>
<feature type="region of interest" description="PAI subdomain" evidence="1">
    <location>
        <begin position="19"/>
        <end position="75"/>
    </location>
</feature>
<feature type="region of interest" description="RED subdomain" evidence="1">
    <location>
        <begin position="94"/>
        <end position="142"/>
    </location>
</feature>
<feature type="region of interest" description="Disordered" evidence="2">
    <location>
        <begin position="304"/>
        <end position="325"/>
    </location>
</feature>
<feature type="compositionally biased region" description="Polar residues" evidence="2">
    <location>
        <begin position="305"/>
        <end position="325"/>
    </location>
</feature>
<feature type="modified residue" description="Phosphothreonine" evidence="15">
    <location>
        <position position="226"/>
    </location>
</feature>
<feature type="splice variant" id="VSP_002345" description="In isoform 3 and isoform 4." evidence="12 13">
    <location>
        <begin position="206"/>
        <end position="228"/>
    </location>
</feature>
<feature type="splice variant" id="VSP_002346" description="In isoform 2 and isoform 4." evidence="13">
    <original>GSEFSGNPYSHPQYTAYNEAWRFSNPALLSSPYYYSAAPRGSAPAAAAAAYDRH</original>
    <variation>EAAVGPSSSLMSKPGRKLAEVPPCVQPTGASSPATRTATPSTRPTTRLGDSATPPY</variation>
    <location>
        <begin position="364"/>
        <end position="417"/>
    </location>
</feature>
<feature type="sequence variant" id="VAR_071937" description="In PAPRS." evidence="10">
    <original>D</original>
    <variation>G</variation>
    <location>
        <position position="2"/>
    </location>
</feature>
<feature type="sequence variant" id="VAR_068079" description="Found in a patient with non-syndromic renal hypodysplasia; likely pathogenic; dbSNP:rs201239919." evidence="7">
    <original>G</original>
    <variation>E</variation>
    <location>
        <position position="24"/>
    </location>
</feature>
<feature type="sequence variant" id="VAR_068080" description="In PAPRS." evidence="9">
    <original>G</original>
    <variation>V</variation>
    <location>
        <position position="25"/>
    </location>
</feature>
<feature type="sequence variant" id="VAR_068081" description="In PAPRS." evidence="9">
    <original>L</original>
    <variation>R</variation>
    <location>
        <position position="33"/>
    </location>
</feature>
<feature type="sequence variant" id="VAR_012442" description="In PAPRS; the patient manifests oligomeganephronia and bilateral optic nerve coloboma." evidence="3">
    <location>
        <begin position="39"/>
        <end position="40"/>
    </location>
</feature>
<feature type="sequence variant" id="VAR_071938" description="In FSGS7; decreased DNA-binding capability and transactivation ability; dbSNP:rs587777708." evidence="10">
    <original>R</original>
    <variation>Q</variation>
    <location>
        <position position="56"/>
    </location>
</feature>
<feature type="sequence variant" id="VAR_068082" description="In PAPRS." evidence="9">
    <original>S</original>
    <variation>I</variation>
    <location>
        <position position="61"/>
    </location>
</feature>
<feature type="sequence variant" id="VAR_068083" description="In PAPRS; dbSNP:rs2133833987." evidence="9">
    <original>S</original>
    <variation>N</variation>
    <location>
        <position position="61"/>
    </location>
</feature>
<feature type="sequence variant" id="VAR_068084" description="In PAPRS." evidence="9">
    <location>
        <begin position="62"/>
        <end position="66"/>
    </location>
</feature>
<feature type="sequence variant" id="VAR_068085" description="In PAPRS." evidence="9">
    <original>L</original>
    <variation>P</variation>
    <location>
        <position position="69"/>
    </location>
</feature>
<feature type="sequence variant" id="VAR_068086" description="In PAPRS; dbSNP:rs104894170." evidence="5">
    <original>R</original>
    <variation>T</variation>
    <location>
        <position position="71"/>
    </location>
</feature>
<feature type="sequence variant" id="VAR_003788" description="In PAPRS.">
    <original>T</original>
    <variation>TET</variation>
    <location>
        <position position="75"/>
    </location>
</feature>
<feature type="sequence variant" id="VAR_068087" description="In PAPRS." evidence="9">
    <original>T</original>
    <variation>TT</variation>
    <location>
        <position position="75"/>
    </location>
</feature>
<feature type="sequence variant" id="VAR_003789" description="In PAPRS; dbSNP:rs79555199." evidence="11">
    <original>G</original>
    <variation>S</variation>
    <location>
        <position position="76"/>
    </location>
</feature>
<feature type="sequence variant" id="VAR_071939" description="In FSGS7; decreased DNA-binding capability and transactivation ability; dbSNP:rs1554856032." evidence="10">
    <original>P</original>
    <variation>L</variation>
    <location>
        <position position="80"/>
    </location>
</feature>
<feature type="sequence variant" id="VAR_068088" description="In PAPRS." evidence="9">
    <original>G</original>
    <variation>GSIKPGVIG</variation>
    <location>
        <position position="84"/>
    </location>
</feature>
<feature type="sequence variant" id="VAR_068089" description="In PAPRS; dbSNP:rs2133836340." evidence="9">
    <original>G</original>
    <variation>S</variation>
    <location>
        <position position="84"/>
    </location>
</feature>
<feature type="sequence variant" id="VAR_068090" description="In PAPRS; dbSNP:rs773306707." evidence="9">
    <original>R</original>
    <variation>P</variation>
    <location>
        <position position="117"/>
    </location>
</feature>
<feature type="sequence variant" id="VAR_068091" description="In PAPRS." evidence="6">
    <original>P</original>
    <variation>H</variation>
    <location>
        <position position="130"/>
    </location>
</feature>
<feature type="sequence variant" id="VAR_068092" description="In PAPRS; dbSNP:rs1054215531." evidence="9">
    <original>P</original>
    <variation>S</variation>
    <location>
        <position position="130"/>
    </location>
</feature>
<feature type="sequence variant" id="VAR_071940" description="In FSGS7; decreased DNA-binding capability and transactivation ability." evidence="10">
    <original>S</original>
    <variation>F</variation>
    <location>
        <position position="133"/>
    </location>
</feature>
<feature type="sequence variant" id="VAR_071941" description="In PAPRS." evidence="10">
    <original>I</original>
    <variation>V</variation>
    <location>
        <position position="139"/>
    </location>
</feature>
<feature type="sequence variant" id="VAR_071942" description="In FSGS7; dbSNP:rs1201078720." evidence="10">
    <original>T</original>
    <variation>A</variation>
    <location>
        <position position="150"/>
    </location>
</feature>
<feature type="sequence variant" id="VAR_068093" description="In dbSNP:rs201383632." evidence="9">
    <original>A</original>
    <variation>T</variation>
    <location>
        <position position="160"/>
    </location>
</feature>
<feature type="sequence variant" id="VAR_068094" description="In FSGS7; dbSNP:rs370214925." evidence="9 10">
    <original>T</original>
    <variation>N</variation>
    <location>
        <position position="164"/>
    </location>
</feature>
<feature type="sequence variant" id="VAR_068095" evidence="9">
    <original>S</original>
    <variation>T</variation>
    <location>
        <position position="175"/>
    </location>
</feature>
<feature type="sequence variant" id="VAR_071943" description="In FSGS7; transactivation activity is dramatically decreased in presence of TLE4; dramatically enhances interaction with TLE4; dbSNP:rs1131692055." evidence="10">
    <original>G</original>
    <variation>R</variation>
    <location>
        <position position="189"/>
    </location>
</feature>
<feature type="sequence variant" id="VAR_071944" description="In PAPRS; dbSNP:rs1403345811." evidence="10">
    <original>A</original>
    <variation>V</variation>
    <location>
        <position position="295"/>
    </location>
</feature>
<feature type="sequence variant" id="VAR_071945" description="In PAPRS." evidence="10">
    <original>L</original>
    <variation>P</variation>
    <location>
        <position position="296"/>
    </location>
</feature>
<feature type="sequence variant" id="VAR_071946" description="In PAPRS; dbSNP:rs893370744." evidence="10">
    <original>P</original>
    <variation>S</variation>
    <location>
        <position position="298"/>
    </location>
</feature>
<feature type="sequence variant" id="VAR_071947" description="In PAPRS." evidence="10">
    <original>T</original>
    <variation>A</variation>
    <location>
        <position position="329"/>
    </location>
</feature>
<feature type="sequence variant" id="VAR_012443" description="In dbSNP:rs78738655." evidence="4 9">
    <original>A</original>
    <variation>V</variation>
    <location>
        <position position="334"/>
    </location>
</feature>
<feature type="sequence variant" id="VAR_068096" description="Found in a patient with bilateral optic nerve colobomas; uncertain significance; dbSNP:rs138490772." evidence="9">
    <original>S</original>
    <variation>N</variation>
    <location>
        <position position="387"/>
    </location>
</feature>
<feature type="sequence conflict" description="In Ref. 6; AAC41711." evidence="14" ref="6">
    <original>PG</original>
    <variation>R</variation>
    <location>
        <begin position="15"/>
        <end position="16"/>
    </location>
</feature>
<feature type="sequence conflict" description="In Ref. 1; AAA60024 and 3; AAC63385." evidence="14" ref="1 3">
    <location>
        <position position="404"/>
    </location>
</feature>
<feature type="sequence conflict" description="In Ref. 1; AAA60024 and 3; AAC63385." evidence="14" ref="1 3">
    <original>A</original>
    <variation>R</variation>
    <location>
        <position position="410"/>
    </location>
</feature>
<comment type="function">
    <text evidence="10">Transcription factor that may have a role in kidney cell differentiation (PubMed:24676634). Has a critical role in the development of the urogenital tract, the eyes, and the CNS.</text>
</comment>
<comment type="subunit">
    <text evidence="8 10">Interacts with ELGN3; the interaction targets PAX2 for destruction. Interacts with TLE4.</text>
</comment>
<comment type="interaction">
    <interactant intactId="EBI-1805765">
        <id>Q02962</id>
    </interactant>
    <interactant intactId="EBI-10258690">
        <id>O60663-2</id>
        <label>LMX1B</label>
    </interactant>
    <organismsDiffer>false</organismsDiffer>
    <experiments>3</experiments>
</comment>
<comment type="subcellular location">
    <subcellularLocation>
        <location>Nucleus</location>
    </subcellularLocation>
</comment>
<comment type="alternative products">
    <event type="alternative splicing"/>
    <isoform>
        <id>Q02962-1</id>
        <name>1</name>
        <sequence type="displayed"/>
    </isoform>
    <isoform>
        <id>Q02962-2</id>
        <name>2</name>
        <name>Fetal kidney</name>
        <sequence type="described" ref="VSP_002346"/>
    </isoform>
    <isoform>
        <id>Q02962-3</id>
        <name>3</name>
        <sequence type="described" ref="VSP_002345"/>
    </isoform>
    <isoform>
        <id>Q02962-4</id>
        <name>4</name>
        <sequence type="described" ref="VSP_002345 VSP_002346"/>
    </isoform>
</comment>
<comment type="tissue specificity">
    <text>Expressed in primitive cells of the kidney, ureter, eye, ear and central nervous system.</text>
</comment>
<comment type="developmental stage">
    <text>Mainly in fetal kidney and juvenile nephrogenic rests.</text>
</comment>
<comment type="disease" evidence="3 5 6 9 10 11">
    <disease id="DI-02258">
        <name>Papillorenal syndrome</name>
        <acronym>PAPRS</acronym>
        <description>An autosomal dominant disorder characterized by both ocular and renal anomalies, but may also include vesicoureteral reflux, high frequency hearing loss, central nervous system anomalies, and/or genital anomalies. Eye anomalies in this disorder consist of a wide and sometimes excavated dysplastic optic disk with the emergence of the retinal vessels from the periphery of the disk, designated optic nerve coloboma or 'morning glory' anomaly. Associated findings may include a small corneal diameter, retinal coloboma, scleral staphyloma, optic nerve cyst, microphthalmia, and pigmentary macular dysplasia. The kidneys are small and abnormally formed (renal hypodysplasia), and have fewer than the normal number of glomeruli, which are enlarged (oligomeganephronia). These ocular and renal anomalies result in decreased visual acuity and retinal detachment, as well as hypertension, proteinuria, and renal insufficiency that frequently progresses to end-stage renal disease.</description>
        <dbReference type="MIM" id="120330"/>
    </disease>
    <text>The disease is caused by variants affecting the gene represented in this entry.</text>
</comment>
<comment type="disease" evidence="10">
    <disease id="DI-04217">
        <name>Focal segmental glomerulosclerosis 7</name>
        <acronym>FSGS7</acronym>
        <description>A renal pathology defined by the presence of segmental sclerosis in glomeruli and resulting in proteinuria, reduced glomerular filtration rate and progressive decline in renal function. Renal insufficiency often progresses to end-stage renal disease, a highly morbid state requiring either dialysis therapy or kidney transplantation.</description>
        <dbReference type="MIM" id="616002"/>
    </disease>
    <text>The disease is caused by variants affecting the gene represented in this entry.</text>
</comment>
<comment type="online information" name="Atlas of Genetics and Cytogenetics in Oncology and Haematology">
    <link uri="https://atlasgeneticsoncology.org/gene/41642/PAX2"/>
</comment>
<comment type="online information" name="PAX2 variant database paired box 2 (PAX2)">
    <link uri="https://databases.lovd.nl/shared/genes/PAX2"/>
    <text>Leiden Open Variation Database (LOVD)</text>
</comment>
<proteinExistence type="evidence at protein level"/>
<organism>
    <name type="scientific">Homo sapiens</name>
    <name type="common">Human</name>
    <dbReference type="NCBI Taxonomy" id="9606"/>
    <lineage>
        <taxon>Eukaryota</taxon>
        <taxon>Metazoa</taxon>
        <taxon>Chordata</taxon>
        <taxon>Craniata</taxon>
        <taxon>Vertebrata</taxon>
        <taxon>Euteleostomi</taxon>
        <taxon>Mammalia</taxon>
        <taxon>Eutheria</taxon>
        <taxon>Euarchontoglires</taxon>
        <taxon>Primates</taxon>
        <taxon>Haplorrhini</taxon>
        <taxon>Catarrhini</taxon>
        <taxon>Hominidae</taxon>
        <taxon>Homo</taxon>
    </lineage>
</organism>
<gene>
    <name type="primary">PAX2</name>
</gene>
<dbReference type="EMBL" id="M89470">
    <property type="protein sequence ID" value="AAA60024.1"/>
    <property type="molecule type" value="mRNA"/>
</dbReference>
<dbReference type="EMBL" id="L25597">
    <property type="protein sequence ID" value="AAA36417.1"/>
    <property type="molecule type" value="mRNA"/>
</dbReference>
<dbReference type="EMBL" id="U45255">
    <property type="protein sequence ID" value="AAC63385.1"/>
    <property type="molecule type" value="Genomic_DNA"/>
</dbReference>
<dbReference type="EMBL" id="U45245">
    <property type="protein sequence ID" value="AAC63385.1"/>
    <property type="status" value="JOINED"/>
    <property type="molecule type" value="Genomic_DNA"/>
</dbReference>
<dbReference type="EMBL" id="U45246">
    <property type="protein sequence ID" value="AAC63385.1"/>
    <property type="status" value="JOINED"/>
    <property type="molecule type" value="Genomic_DNA"/>
</dbReference>
<dbReference type="EMBL" id="U45247">
    <property type="protein sequence ID" value="AAC63385.1"/>
    <property type="status" value="JOINED"/>
    <property type="molecule type" value="Genomic_DNA"/>
</dbReference>
<dbReference type="EMBL" id="U45248">
    <property type="protein sequence ID" value="AAC63385.1"/>
    <property type="status" value="JOINED"/>
    <property type="molecule type" value="Genomic_DNA"/>
</dbReference>
<dbReference type="EMBL" id="U45249">
    <property type="protein sequence ID" value="AAC63385.1"/>
    <property type="status" value="JOINED"/>
    <property type="molecule type" value="Genomic_DNA"/>
</dbReference>
<dbReference type="EMBL" id="U45250">
    <property type="protein sequence ID" value="AAC63385.1"/>
    <property type="status" value="JOINED"/>
    <property type="molecule type" value="Genomic_DNA"/>
</dbReference>
<dbReference type="EMBL" id="U45251">
    <property type="protein sequence ID" value="AAC63385.1"/>
    <property type="status" value="JOINED"/>
    <property type="molecule type" value="Genomic_DNA"/>
</dbReference>
<dbReference type="EMBL" id="U45253">
    <property type="protein sequence ID" value="AAC63385.1"/>
    <property type="status" value="JOINED"/>
    <property type="molecule type" value="Genomic_DNA"/>
</dbReference>
<dbReference type="EMBL" id="U45254">
    <property type="protein sequence ID" value="AAC63385.1"/>
    <property type="status" value="JOINED"/>
    <property type="molecule type" value="Genomic_DNA"/>
</dbReference>
<dbReference type="EMBL" id="AL138762">
    <property type="status" value="NOT_ANNOTATED_CDS"/>
    <property type="molecule type" value="Genomic_DNA"/>
</dbReference>
<dbReference type="EMBL" id="AL589862">
    <property type="status" value="NOT_ANNOTATED_CDS"/>
    <property type="molecule type" value="Genomic_DNA"/>
</dbReference>
<dbReference type="EMBL" id="CH471066">
    <property type="protein sequence ID" value="EAW49812.1"/>
    <property type="molecule type" value="Genomic_DNA"/>
</dbReference>
<dbReference type="EMBL" id="CH471066">
    <property type="protein sequence ID" value="EAW49813.1"/>
    <property type="molecule type" value="Genomic_DNA"/>
</dbReference>
<dbReference type="EMBL" id="L09747">
    <property type="protein sequence ID" value="AAC41711.1"/>
    <property type="molecule type" value="Genomic_DNA"/>
</dbReference>
<dbReference type="EMBL" id="L09748">
    <property type="protein sequence ID" value="AAC41711.1"/>
    <property type="status" value="JOINED"/>
    <property type="molecule type" value="Genomic_DNA"/>
</dbReference>
<dbReference type="EMBL" id="L09746">
    <property type="protein sequence ID" value="AAC41711.1"/>
    <property type="status" value="JOINED"/>
    <property type="molecule type" value="Genomic_DNA"/>
</dbReference>
<dbReference type="CCDS" id="CCDS41561.1">
    <molecule id="Q02962-3"/>
</dbReference>
<dbReference type="CCDS" id="CCDS53569.1">
    <molecule id="Q02962-1"/>
</dbReference>
<dbReference type="CCDS" id="CCDS7499.1">
    <molecule id="Q02962-4"/>
</dbReference>
<dbReference type="PIR" id="A49008">
    <property type="entry name" value="A49008"/>
</dbReference>
<dbReference type="RefSeq" id="NP_000269.3">
    <molecule id="Q02962-3"/>
    <property type="nucleotide sequence ID" value="NM_000278.4"/>
</dbReference>
<dbReference type="RefSeq" id="NP_001291498.1">
    <property type="nucleotide sequence ID" value="NM_001304569.1"/>
</dbReference>
<dbReference type="RefSeq" id="NP_003978.3">
    <molecule id="Q02962-1"/>
    <property type="nucleotide sequence ID" value="NM_003987.4"/>
</dbReference>
<dbReference type="RefSeq" id="NP_003979.2">
    <molecule id="Q02962-4"/>
    <property type="nucleotide sequence ID" value="NM_003988.4"/>
</dbReference>
<dbReference type="RefSeq" id="NP_003980.3">
    <property type="nucleotide sequence ID" value="NM_003989.4"/>
</dbReference>
<dbReference type="RefSeq" id="NP_003981.3">
    <property type="nucleotide sequence ID" value="NM_003990.4"/>
</dbReference>
<dbReference type="SMR" id="Q02962"/>
<dbReference type="BioGRID" id="111110">
    <property type="interactions" value="83"/>
</dbReference>
<dbReference type="CORUM" id="Q02962"/>
<dbReference type="FunCoup" id="Q02962">
    <property type="interactions" value="254"/>
</dbReference>
<dbReference type="IntAct" id="Q02962">
    <property type="interactions" value="71"/>
</dbReference>
<dbReference type="MINT" id="Q02962"/>
<dbReference type="STRING" id="9606.ENSP00000359319"/>
<dbReference type="BindingDB" id="Q02962"/>
<dbReference type="ChEMBL" id="CHEMBL5465301"/>
<dbReference type="iPTMnet" id="Q02962"/>
<dbReference type="PhosphoSitePlus" id="Q02962"/>
<dbReference type="BioMuta" id="PAX2"/>
<dbReference type="DMDM" id="223590261"/>
<dbReference type="jPOST" id="Q02962"/>
<dbReference type="MassIVE" id="Q02962"/>
<dbReference type="PaxDb" id="9606-ENSP00000359319"/>
<dbReference type="PeptideAtlas" id="Q02962"/>
<dbReference type="ProteomicsDB" id="58144">
    <molecule id="Q02962-1"/>
</dbReference>
<dbReference type="ProteomicsDB" id="58145">
    <molecule id="Q02962-2"/>
</dbReference>
<dbReference type="ProteomicsDB" id="58146">
    <molecule id="Q02962-3"/>
</dbReference>
<dbReference type="ProteomicsDB" id="58147">
    <molecule id="Q02962-4"/>
</dbReference>
<dbReference type="Antibodypedia" id="31200">
    <property type="antibodies" value="561 antibodies from 42 providers"/>
</dbReference>
<dbReference type="DNASU" id="5076"/>
<dbReference type="Ensembl" id="ENST00000355243.8">
    <molecule id="Q02962-3"/>
    <property type="protein sequence ID" value="ENSP00000347385.3"/>
    <property type="gene ID" value="ENSG00000075891.24"/>
</dbReference>
<dbReference type="Ensembl" id="ENST00000370296.6">
    <molecule id="Q02962-4"/>
    <property type="protein sequence ID" value="ENSP00000359319.3"/>
    <property type="gene ID" value="ENSG00000075891.24"/>
</dbReference>
<dbReference type="Ensembl" id="ENST00000428433.5">
    <molecule id="Q02962-1"/>
    <property type="protein sequence ID" value="ENSP00000396259.1"/>
    <property type="gene ID" value="ENSG00000075891.24"/>
</dbReference>
<dbReference type="GeneID" id="5076"/>
<dbReference type="KEGG" id="hsa:5076"/>
<dbReference type="MANE-Select" id="ENST00000355243.8">
    <molecule id="Q02962-3"/>
    <property type="protein sequence ID" value="ENSP00000347385.3"/>
    <property type="RefSeq nucleotide sequence ID" value="NM_000278.5"/>
    <property type="RefSeq protein sequence ID" value="NP_000269.3"/>
</dbReference>
<dbReference type="UCSC" id="uc001krl.4">
    <molecule id="Q02962-1"/>
    <property type="organism name" value="human"/>
</dbReference>
<dbReference type="AGR" id="HGNC:8616"/>
<dbReference type="CTD" id="5076"/>
<dbReference type="DisGeNET" id="5076"/>
<dbReference type="GeneCards" id="PAX2"/>
<dbReference type="GeneReviews" id="PAX2"/>
<dbReference type="HGNC" id="HGNC:8616">
    <property type="gene designation" value="PAX2"/>
</dbReference>
<dbReference type="HPA" id="ENSG00000075891">
    <property type="expression patterns" value="Group enriched (epididymis, kidney)"/>
</dbReference>
<dbReference type="MalaCards" id="PAX2"/>
<dbReference type="MIM" id="120330">
    <property type="type" value="phenotype"/>
</dbReference>
<dbReference type="MIM" id="167409">
    <property type="type" value="gene"/>
</dbReference>
<dbReference type="MIM" id="616002">
    <property type="type" value="phenotype"/>
</dbReference>
<dbReference type="neXtProt" id="NX_Q02962"/>
<dbReference type="OpenTargets" id="ENSG00000075891"/>
<dbReference type="Orphanet" id="656">
    <property type="disease" value="Hereditary steroid-resistant nephrotic syndrome"/>
</dbReference>
<dbReference type="Orphanet" id="1475">
    <property type="disease" value="Renal coloboma syndrome"/>
</dbReference>
<dbReference type="Orphanet" id="97362">
    <property type="disease" value="Renal hypoplasia, bilateral"/>
</dbReference>
<dbReference type="PharmGKB" id="PA32956"/>
<dbReference type="VEuPathDB" id="HostDB:ENSG00000075891"/>
<dbReference type="eggNOG" id="KOG3862">
    <property type="taxonomic scope" value="Eukaryota"/>
</dbReference>
<dbReference type="GeneTree" id="ENSGT00940000157412"/>
<dbReference type="InParanoid" id="Q02962"/>
<dbReference type="OMA" id="TYPVVTX"/>
<dbReference type="OrthoDB" id="3225452at2759"/>
<dbReference type="PAN-GO" id="Q02962">
    <property type="GO annotations" value="4 GO annotations based on evolutionary models"/>
</dbReference>
<dbReference type="PhylomeDB" id="Q02962"/>
<dbReference type="TreeFam" id="TF315397"/>
<dbReference type="PathwayCommons" id="Q02962"/>
<dbReference type="Reactome" id="R-HSA-9761174">
    <property type="pathway name" value="Formation of intermediate mesoderm"/>
</dbReference>
<dbReference type="Reactome" id="R-HSA-9830364">
    <property type="pathway name" value="Formation of the nephric duct"/>
</dbReference>
<dbReference type="Reactome" id="R-HSA-9830674">
    <property type="pathway name" value="Formation of the ureteric bud"/>
</dbReference>
<dbReference type="SignaLink" id="Q02962"/>
<dbReference type="SIGNOR" id="Q02962"/>
<dbReference type="BioGRID-ORCS" id="5076">
    <property type="hits" value="12 hits in 1168 CRISPR screens"/>
</dbReference>
<dbReference type="ChiTaRS" id="PAX2">
    <property type="organism name" value="human"/>
</dbReference>
<dbReference type="GeneWiki" id="PAX2"/>
<dbReference type="GenomeRNAi" id="5076"/>
<dbReference type="Pharos" id="Q02962">
    <property type="development level" value="Tbio"/>
</dbReference>
<dbReference type="PRO" id="PR:Q02962"/>
<dbReference type="Proteomes" id="UP000005640">
    <property type="component" value="Chromosome 10"/>
</dbReference>
<dbReference type="RNAct" id="Q02962">
    <property type="molecule type" value="protein"/>
</dbReference>
<dbReference type="Bgee" id="ENSG00000075891">
    <property type="expression patterns" value="Expressed in metanephros cortex and 62 other cell types or tissues"/>
</dbReference>
<dbReference type="ExpressionAtlas" id="Q02962">
    <property type="expression patterns" value="baseline and differential"/>
</dbReference>
<dbReference type="GO" id="GO:0034451">
    <property type="term" value="C:centriolar satellite"/>
    <property type="evidence" value="ECO:0000314"/>
    <property type="project" value="BHF-UCL"/>
</dbReference>
<dbReference type="GO" id="GO:0000785">
    <property type="term" value="C:chromatin"/>
    <property type="evidence" value="ECO:0000247"/>
    <property type="project" value="NTNU_SB"/>
</dbReference>
<dbReference type="GO" id="GO:0005815">
    <property type="term" value="C:microtubule organizing center"/>
    <property type="evidence" value="ECO:0000314"/>
    <property type="project" value="BHF-UCL"/>
</dbReference>
<dbReference type="GO" id="GO:0005654">
    <property type="term" value="C:nucleoplasm"/>
    <property type="evidence" value="ECO:0000314"/>
    <property type="project" value="HPA"/>
</dbReference>
<dbReference type="GO" id="GO:0005634">
    <property type="term" value="C:nucleus"/>
    <property type="evidence" value="ECO:0000314"/>
    <property type="project" value="UniProtKB"/>
</dbReference>
<dbReference type="GO" id="GO:0032991">
    <property type="term" value="C:protein-containing complex"/>
    <property type="evidence" value="ECO:0000250"/>
    <property type="project" value="UniProtKB"/>
</dbReference>
<dbReference type="GO" id="GO:0032993">
    <property type="term" value="C:protein-DNA complex"/>
    <property type="evidence" value="ECO:0000250"/>
    <property type="project" value="UniProtKB"/>
</dbReference>
<dbReference type="GO" id="GO:0000987">
    <property type="term" value="F:cis-regulatory region sequence-specific DNA binding"/>
    <property type="evidence" value="ECO:0000314"/>
    <property type="project" value="UniProtKB"/>
</dbReference>
<dbReference type="GO" id="GO:0003677">
    <property type="term" value="F:DNA binding"/>
    <property type="evidence" value="ECO:0000314"/>
    <property type="project" value="UniProtKB"/>
</dbReference>
<dbReference type="GO" id="GO:0003700">
    <property type="term" value="F:DNA-binding transcription factor activity"/>
    <property type="evidence" value="ECO:0000315"/>
    <property type="project" value="UniProtKB"/>
</dbReference>
<dbReference type="GO" id="GO:0000981">
    <property type="term" value="F:DNA-binding transcription factor activity, RNA polymerase II-specific"/>
    <property type="evidence" value="ECO:0000247"/>
    <property type="project" value="NTNU_SB"/>
</dbReference>
<dbReference type="GO" id="GO:0000978">
    <property type="term" value="F:RNA polymerase II cis-regulatory region sequence-specific DNA binding"/>
    <property type="evidence" value="ECO:0000318"/>
    <property type="project" value="GO_Central"/>
</dbReference>
<dbReference type="GO" id="GO:1990837">
    <property type="term" value="F:sequence-specific double-stranded DNA binding"/>
    <property type="evidence" value="ECO:0000314"/>
    <property type="project" value="ARUK-UCL"/>
</dbReference>
<dbReference type="GO" id="GO:0000976">
    <property type="term" value="F:transcription cis-regulatory region binding"/>
    <property type="evidence" value="ECO:0000314"/>
    <property type="project" value="UniProtKB"/>
</dbReference>
<dbReference type="GO" id="GO:0008134">
    <property type="term" value="F:transcription factor binding"/>
    <property type="evidence" value="ECO:0000353"/>
    <property type="project" value="UniProtKB"/>
</dbReference>
<dbReference type="GO" id="GO:0007409">
    <property type="term" value="P:axonogenesis"/>
    <property type="evidence" value="ECO:0000304"/>
    <property type="project" value="ProtInc"/>
</dbReference>
<dbReference type="GO" id="GO:0048854">
    <property type="term" value="P:brain morphogenesis"/>
    <property type="evidence" value="ECO:0000250"/>
    <property type="project" value="UniProtKB"/>
</dbReference>
<dbReference type="GO" id="GO:0001658">
    <property type="term" value="P:branching involved in ureteric bud morphogenesis"/>
    <property type="evidence" value="ECO:0000270"/>
    <property type="project" value="UniProtKB"/>
</dbReference>
<dbReference type="GO" id="GO:0043010">
    <property type="term" value="P:camera-type eye development"/>
    <property type="evidence" value="ECO:0000250"/>
    <property type="project" value="UniProtKB"/>
</dbReference>
<dbReference type="GO" id="GO:0001709">
    <property type="term" value="P:cell fate determination"/>
    <property type="evidence" value="ECO:0000250"/>
    <property type="project" value="UniProtKB"/>
</dbReference>
<dbReference type="GO" id="GO:0071333">
    <property type="term" value="P:cellular response to glucose stimulus"/>
    <property type="evidence" value="ECO:0000250"/>
    <property type="project" value="UniProtKB"/>
</dbReference>
<dbReference type="GO" id="GO:0071300">
    <property type="term" value="P:cellular response to retinoic acid"/>
    <property type="evidence" value="ECO:0000250"/>
    <property type="project" value="UniProtKB"/>
</dbReference>
<dbReference type="GO" id="GO:0090102">
    <property type="term" value="P:cochlea development"/>
    <property type="evidence" value="ECO:0000250"/>
    <property type="project" value="UniProtKB"/>
</dbReference>
<dbReference type="GO" id="GO:0090103">
    <property type="term" value="P:cochlea morphogenesis"/>
    <property type="evidence" value="ECO:0000250"/>
    <property type="project" value="UniProtKB"/>
</dbReference>
<dbReference type="GO" id="GO:0010001">
    <property type="term" value="P:glial cell differentiation"/>
    <property type="evidence" value="ECO:0000250"/>
    <property type="project" value="UniProtKB"/>
</dbReference>
<dbReference type="GO" id="GO:0042472">
    <property type="term" value="P:inner ear morphogenesis"/>
    <property type="evidence" value="ECO:0000250"/>
    <property type="project" value="UniProtKB"/>
</dbReference>
<dbReference type="GO" id="GO:0060231">
    <property type="term" value="P:mesenchymal to epithelial transition"/>
    <property type="evidence" value="ECO:0000250"/>
    <property type="project" value="UniProtKB"/>
</dbReference>
<dbReference type="GO" id="GO:0003337">
    <property type="term" value="P:mesenchymal to epithelial transition involved in metanephros morphogenesis"/>
    <property type="evidence" value="ECO:0000250"/>
    <property type="project" value="UniProtKB"/>
</dbReference>
<dbReference type="GO" id="GO:0007501">
    <property type="term" value="P:mesodermal cell fate specification"/>
    <property type="evidence" value="ECO:0000250"/>
    <property type="project" value="UniProtKB"/>
</dbReference>
<dbReference type="GO" id="GO:0001823">
    <property type="term" value="P:mesonephros development"/>
    <property type="evidence" value="ECO:0000250"/>
    <property type="project" value="UniProtKB"/>
</dbReference>
<dbReference type="GO" id="GO:0072205">
    <property type="term" value="P:metanephric collecting duct development"/>
    <property type="evidence" value="ECO:0000250"/>
    <property type="project" value="UniProtKB"/>
</dbReference>
<dbReference type="GO" id="GO:0072221">
    <property type="term" value="P:metanephric distal convoluted tubule development"/>
    <property type="evidence" value="ECO:0000250"/>
    <property type="project" value="UniProtKB"/>
</dbReference>
<dbReference type="GO" id="GO:0072207">
    <property type="term" value="P:metanephric epithelium development"/>
    <property type="evidence" value="ECO:0000270"/>
    <property type="project" value="UniProtKB"/>
</dbReference>
<dbReference type="GO" id="GO:0072162">
    <property type="term" value="P:metanephric mesenchymal cell differentiation"/>
    <property type="evidence" value="ECO:0000250"/>
    <property type="project" value="UniProtKB"/>
</dbReference>
<dbReference type="GO" id="GO:0072075">
    <property type="term" value="P:metanephric mesenchyme development"/>
    <property type="evidence" value="ECO:0000250"/>
    <property type="project" value="UniProtKB"/>
</dbReference>
<dbReference type="GO" id="GO:0072289">
    <property type="term" value="P:metanephric nephron tubule formation"/>
    <property type="evidence" value="ECO:0000250"/>
    <property type="project" value="UniProtKB"/>
</dbReference>
<dbReference type="GO" id="GO:0043066">
    <property type="term" value="P:negative regulation of apoptotic process"/>
    <property type="evidence" value="ECO:0000314"/>
    <property type="project" value="UniProtKB"/>
</dbReference>
<dbReference type="GO" id="GO:1900215">
    <property type="term" value="P:negative regulation of apoptotic process involved in metanephric collecting duct development"/>
    <property type="evidence" value="ECO:0000250"/>
    <property type="project" value="UniProtKB"/>
</dbReference>
<dbReference type="GO" id="GO:1900218">
    <property type="term" value="P:negative regulation of apoptotic process involved in metanephric nephron tubule development"/>
    <property type="evidence" value="ECO:0000250"/>
    <property type="project" value="UniProtKB"/>
</dbReference>
<dbReference type="GO" id="GO:0045892">
    <property type="term" value="P:negative regulation of DNA-templated transcription"/>
    <property type="evidence" value="ECO:0000315"/>
    <property type="project" value="UniProtKB"/>
</dbReference>
<dbReference type="GO" id="GO:0072305">
    <property type="term" value="P:negative regulation of mesenchymal cell apoptotic process involved in metanephric nephron morphogenesis"/>
    <property type="evidence" value="ECO:0000250"/>
    <property type="project" value="UniProtKB"/>
</dbReference>
<dbReference type="GO" id="GO:1900212">
    <property type="term" value="P:negative regulation of mesenchymal cell apoptotic process involved in metanephros development"/>
    <property type="evidence" value="ECO:0000250"/>
    <property type="project" value="UniProtKB"/>
</dbReference>
<dbReference type="GO" id="GO:0043069">
    <property type="term" value="P:negative regulation of programmed cell death"/>
    <property type="evidence" value="ECO:0000250"/>
    <property type="project" value="UniProtKB"/>
</dbReference>
<dbReference type="GO" id="GO:2000378">
    <property type="term" value="P:negative regulation of reactive oxygen species metabolic process"/>
    <property type="evidence" value="ECO:0000314"/>
    <property type="project" value="UniProtKB"/>
</dbReference>
<dbReference type="GO" id="GO:0072179">
    <property type="term" value="P:nephric duct formation"/>
    <property type="evidence" value="ECO:0000250"/>
    <property type="project" value="UniProtKB"/>
</dbReference>
<dbReference type="GO" id="GO:0007399">
    <property type="term" value="P:nervous system development"/>
    <property type="evidence" value="ECO:0000318"/>
    <property type="project" value="GO_Central"/>
</dbReference>
<dbReference type="GO" id="GO:0001843">
    <property type="term" value="P:neural tube closure"/>
    <property type="evidence" value="ECO:0000250"/>
    <property type="project" value="UniProtKB"/>
</dbReference>
<dbReference type="GO" id="GO:0061360">
    <property type="term" value="P:optic chiasma development"/>
    <property type="evidence" value="ECO:0000250"/>
    <property type="project" value="UniProtKB"/>
</dbReference>
<dbReference type="GO" id="GO:0002072">
    <property type="term" value="P:optic cup morphogenesis involved in camera-type eye development"/>
    <property type="evidence" value="ECO:0000250"/>
    <property type="project" value="UniProtKB"/>
</dbReference>
<dbReference type="GO" id="GO:0021554">
    <property type="term" value="P:optic nerve development"/>
    <property type="evidence" value="ECO:0000250"/>
    <property type="project" value="UniProtKB"/>
</dbReference>
<dbReference type="GO" id="GO:0021631">
    <property type="term" value="P:optic nerve morphogenesis"/>
    <property type="evidence" value="ECO:0000250"/>
    <property type="project" value="UniProtKB"/>
</dbReference>
<dbReference type="GO" id="GO:0021633">
    <property type="term" value="P:optic nerve structural organization"/>
    <property type="evidence" value="ECO:0000250"/>
    <property type="project" value="UniProtKB"/>
</dbReference>
<dbReference type="GO" id="GO:0045893">
    <property type="term" value="P:positive regulation of DNA-templated transcription"/>
    <property type="evidence" value="ECO:0000314"/>
    <property type="project" value="UniProtKB"/>
</dbReference>
<dbReference type="GO" id="GO:0050679">
    <property type="term" value="P:positive regulation of epithelial cell proliferation"/>
    <property type="evidence" value="ECO:0000314"/>
    <property type="project" value="UniProtKB"/>
</dbReference>
<dbReference type="GO" id="GO:0072108">
    <property type="term" value="P:positive regulation of mesenchymal to epithelial transition involved in metanephros morphogenesis"/>
    <property type="evidence" value="ECO:0000250"/>
    <property type="project" value="UniProtKB"/>
</dbReference>
<dbReference type="GO" id="GO:2000594">
    <property type="term" value="P:positive regulation of metanephric DCT cell differentiation"/>
    <property type="evidence" value="ECO:0000250"/>
    <property type="project" value="UniProtKB"/>
</dbReference>
<dbReference type="GO" id="GO:0072300">
    <property type="term" value="P:positive regulation of metanephric glomerulus development"/>
    <property type="evidence" value="ECO:0000250"/>
    <property type="project" value="UniProtKB"/>
</dbReference>
<dbReference type="GO" id="GO:2000597">
    <property type="term" value="P:positive regulation of optic nerve formation"/>
    <property type="evidence" value="ECO:0000250"/>
    <property type="project" value="UniProtKB"/>
</dbReference>
<dbReference type="GO" id="GO:0045944">
    <property type="term" value="P:positive regulation of transcription by RNA polymerase II"/>
    <property type="evidence" value="ECO:0000314"/>
    <property type="project" value="UniProtKB"/>
</dbReference>
<dbReference type="GO" id="GO:0039003">
    <property type="term" value="P:pronephric field specification"/>
    <property type="evidence" value="ECO:0000250"/>
    <property type="project" value="UniProtKB"/>
</dbReference>
<dbReference type="GO" id="GO:0048793">
    <property type="term" value="P:pronephros development"/>
    <property type="evidence" value="ECO:0000250"/>
    <property type="project" value="UniProtKB"/>
</dbReference>
<dbReference type="GO" id="GO:0072307">
    <property type="term" value="P:regulation of metanephric nephron tubule epithelial cell differentiation"/>
    <property type="evidence" value="ECO:0000250"/>
    <property type="project" value="UniProtKB"/>
</dbReference>
<dbReference type="GO" id="GO:0035566">
    <property type="term" value="P:regulation of metanephros size"/>
    <property type="evidence" value="ECO:0000315"/>
    <property type="project" value="UniProtKB"/>
</dbReference>
<dbReference type="GO" id="GO:0006357">
    <property type="term" value="P:regulation of transcription by RNA polymerase II"/>
    <property type="evidence" value="ECO:0000318"/>
    <property type="project" value="GO_Central"/>
</dbReference>
<dbReference type="GO" id="GO:0003406">
    <property type="term" value="P:retinal pigment epithelium development"/>
    <property type="evidence" value="ECO:0000250"/>
    <property type="project" value="UniProtKB"/>
</dbReference>
<dbReference type="GO" id="GO:0007423">
    <property type="term" value="P:sensory organ development"/>
    <property type="evidence" value="ECO:0000318"/>
    <property type="project" value="GO_Central"/>
</dbReference>
<dbReference type="GO" id="GO:0048863">
    <property type="term" value="P:stem cell differentiation"/>
    <property type="evidence" value="ECO:0000250"/>
    <property type="project" value="UniProtKB"/>
</dbReference>
<dbReference type="GO" id="GO:0072189">
    <property type="term" value="P:ureter development"/>
    <property type="evidence" value="ECO:0000250"/>
    <property type="project" value="UniProtKB"/>
</dbReference>
<dbReference type="GO" id="GO:0035799">
    <property type="term" value="P:ureter maturation"/>
    <property type="evidence" value="ECO:0000250"/>
    <property type="project" value="UniProtKB"/>
</dbReference>
<dbReference type="GO" id="GO:0001655">
    <property type="term" value="P:urogenital system development"/>
    <property type="evidence" value="ECO:0000250"/>
    <property type="project" value="UniProtKB"/>
</dbReference>
<dbReference type="GO" id="GO:0021650">
    <property type="term" value="P:vestibulocochlear nerve formation"/>
    <property type="evidence" value="ECO:0000250"/>
    <property type="project" value="UniProtKB"/>
</dbReference>
<dbReference type="GO" id="GO:0007601">
    <property type="term" value="P:visual perception"/>
    <property type="evidence" value="ECO:0000304"/>
    <property type="project" value="ProtInc"/>
</dbReference>
<dbReference type="CDD" id="cd00131">
    <property type="entry name" value="PAX"/>
    <property type="match status" value="1"/>
</dbReference>
<dbReference type="FunFam" id="1.10.10.10:FF:000013">
    <property type="entry name" value="Paired box 8 isoform 1"/>
    <property type="match status" value="1"/>
</dbReference>
<dbReference type="FunFam" id="1.10.10.10:FF:000003">
    <property type="entry name" value="Paired box protein Pax-6"/>
    <property type="match status" value="1"/>
</dbReference>
<dbReference type="Gene3D" id="1.10.10.10">
    <property type="entry name" value="Winged helix-like DNA-binding domain superfamily/Winged helix DNA-binding domain"/>
    <property type="match status" value="2"/>
</dbReference>
<dbReference type="InterPro" id="IPR009057">
    <property type="entry name" value="Homeodomain-like_sf"/>
</dbReference>
<dbReference type="InterPro" id="IPR043182">
    <property type="entry name" value="PAIRED_DNA-bd_dom"/>
</dbReference>
<dbReference type="InterPro" id="IPR001523">
    <property type="entry name" value="Paired_dom"/>
</dbReference>
<dbReference type="InterPro" id="IPR022130">
    <property type="entry name" value="Pax2_C"/>
</dbReference>
<dbReference type="InterPro" id="IPR043565">
    <property type="entry name" value="PAX_fam"/>
</dbReference>
<dbReference type="InterPro" id="IPR036388">
    <property type="entry name" value="WH-like_DNA-bd_sf"/>
</dbReference>
<dbReference type="PANTHER" id="PTHR45636:SF19">
    <property type="entry name" value="PAIRED BOX PROTEIN PAX-2"/>
    <property type="match status" value="1"/>
</dbReference>
<dbReference type="PANTHER" id="PTHR45636">
    <property type="entry name" value="PAIRED BOX PROTEIN PAX-6-RELATED-RELATED"/>
    <property type="match status" value="1"/>
</dbReference>
<dbReference type="Pfam" id="PF00292">
    <property type="entry name" value="PAX"/>
    <property type="match status" value="1"/>
</dbReference>
<dbReference type="Pfam" id="PF12403">
    <property type="entry name" value="Pax2_C"/>
    <property type="match status" value="1"/>
</dbReference>
<dbReference type="PRINTS" id="PR00027">
    <property type="entry name" value="PAIREDBOX"/>
</dbReference>
<dbReference type="SMART" id="SM00351">
    <property type="entry name" value="PAX"/>
    <property type="match status" value="1"/>
</dbReference>
<dbReference type="SUPFAM" id="SSF46689">
    <property type="entry name" value="Homeodomain-like"/>
    <property type="match status" value="1"/>
</dbReference>
<dbReference type="PROSITE" id="PS00034">
    <property type="entry name" value="PAIRED_1"/>
    <property type="match status" value="1"/>
</dbReference>
<dbReference type="PROSITE" id="PS51057">
    <property type="entry name" value="PAIRED_2"/>
    <property type="match status" value="1"/>
</dbReference>
<name>PAX2_HUMAN</name>
<evidence type="ECO:0000255" key="1">
    <source>
        <dbReference type="PROSITE-ProRule" id="PRU00381"/>
    </source>
</evidence>
<evidence type="ECO:0000256" key="2">
    <source>
        <dbReference type="SAM" id="MobiDB-lite"/>
    </source>
</evidence>
<evidence type="ECO:0000269" key="3">
    <source>
    </source>
</evidence>
<evidence type="ECO:0000269" key="4">
    <source>
    </source>
</evidence>
<evidence type="ECO:0000269" key="5">
    <source>
    </source>
</evidence>
<evidence type="ECO:0000269" key="6">
    <source>
    </source>
</evidence>
<evidence type="ECO:0000269" key="7">
    <source>
    </source>
</evidence>
<evidence type="ECO:0000269" key="8">
    <source>
    </source>
</evidence>
<evidence type="ECO:0000269" key="9">
    <source>
    </source>
</evidence>
<evidence type="ECO:0000269" key="10">
    <source>
    </source>
</evidence>
<evidence type="ECO:0000269" key="11">
    <source>
    </source>
</evidence>
<evidence type="ECO:0000303" key="12">
    <source>
    </source>
</evidence>
<evidence type="ECO:0000303" key="13">
    <source>
    </source>
</evidence>
<evidence type="ECO:0000305" key="14"/>
<evidence type="ECO:0007744" key="15">
    <source>
    </source>
</evidence>
<accession>Q02962</accession>
<accession>Q15105</accession>
<accession>Q15110</accession>
<accession>Q15837</accession>
<accession>Q5SZP2</accession>
<accession>Q5SZP3</accession>
<reference key="1">
    <citation type="journal article" date="1992" name="Cell Growth Differ.">
        <title>Expression of the PAX2 gene in human fetal kidney and Wilms' tumor.</title>
        <authorList>
            <person name="Eccles M.R."/>
            <person name="Wallis L.J."/>
            <person name="Fidler A.E."/>
            <person name="Spurr N.K."/>
            <person name="Goodfellow P.J."/>
            <person name="Reeve A.E."/>
        </authorList>
    </citation>
    <scope>NUCLEOTIDE SEQUENCE [MRNA] (ISOFORM 3)</scope>
    <source>
        <tissue>Kidney</tissue>
    </source>
</reference>
<reference key="2">
    <citation type="journal article" date="1994" name="Cell Growth Differ.">
        <title>Alternative messenger RNA forms and open reading frames within an additional conserved region of the human PAX-2 gene.</title>
        <authorList>
            <person name="Ward T.A."/>
            <person name="Nebel A."/>
            <person name="Reeve A.E."/>
            <person name="Eccles M.R."/>
        </authorList>
    </citation>
    <scope>NUCLEOTIDE SEQUENCE [MRNA] (ISOFORM 4)</scope>
    <source>
        <tissue>Kidney cortex</tissue>
    </source>
</reference>
<reference key="3">
    <citation type="journal article" date="1996" name="Genomics">
        <title>Genomic structure of the human PAX2 gene.</title>
        <authorList>
            <person name="Sanyanusin P."/>
            <person name="Norrish J.H."/>
            <person name="Ward T.A."/>
            <person name="Nebel A."/>
            <person name="McNoe L.A."/>
            <person name="Eccles M.R."/>
        </authorList>
    </citation>
    <scope>NUCLEOTIDE SEQUENCE [GENOMIC DNA]</scope>
    <scope>ALTERNATIVE SPLICING (ISOFORM 1)</scope>
</reference>
<reference key="4">
    <citation type="journal article" date="2004" name="Nature">
        <title>The DNA sequence and comparative analysis of human chromosome 10.</title>
        <authorList>
            <person name="Deloukas P."/>
            <person name="Earthrowl M.E."/>
            <person name="Grafham D.V."/>
            <person name="Rubenfield M."/>
            <person name="French L."/>
            <person name="Steward C.A."/>
            <person name="Sims S.K."/>
            <person name="Jones M.C."/>
            <person name="Searle S."/>
            <person name="Scott C."/>
            <person name="Howe K."/>
            <person name="Hunt S.E."/>
            <person name="Andrews T.D."/>
            <person name="Gilbert J.G.R."/>
            <person name="Swarbreck D."/>
            <person name="Ashurst J.L."/>
            <person name="Taylor A."/>
            <person name="Battles J."/>
            <person name="Bird C.P."/>
            <person name="Ainscough R."/>
            <person name="Almeida J.P."/>
            <person name="Ashwell R.I.S."/>
            <person name="Ambrose K.D."/>
            <person name="Babbage A.K."/>
            <person name="Bagguley C.L."/>
            <person name="Bailey J."/>
            <person name="Banerjee R."/>
            <person name="Bates K."/>
            <person name="Beasley H."/>
            <person name="Bray-Allen S."/>
            <person name="Brown A.J."/>
            <person name="Brown J.Y."/>
            <person name="Burford D.C."/>
            <person name="Burrill W."/>
            <person name="Burton J."/>
            <person name="Cahill P."/>
            <person name="Camire D."/>
            <person name="Carter N.P."/>
            <person name="Chapman J.C."/>
            <person name="Clark S.Y."/>
            <person name="Clarke G."/>
            <person name="Clee C.M."/>
            <person name="Clegg S."/>
            <person name="Corby N."/>
            <person name="Coulson A."/>
            <person name="Dhami P."/>
            <person name="Dutta I."/>
            <person name="Dunn M."/>
            <person name="Faulkner L."/>
            <person name="Frankish A."/>
            <person name="Frankland J.A."/>
            <person name="Garner P."/>
            <person name="Garnett J."/>
            <person name="Gribble S."/>
            <person name="Griffiths C."/>
            <person name="Grocock R."/>
            <person name="Gustafson E."/>
            <person name="Hammond S."/>
            <person name="Harley J.L."/>
            <person name="Hart E."/>
            <person name="Heath P.D."/>
            <person name="Ho T.P."/>
            <person name="Hopkins B."/>
            <person name="Horne J."/>
            <person name="Howden P.J."/>
            <person name="Huckle E."/>
            <person name="Hynds C."/>
            <person name="Johnson C."/>
            <person name="Johnson D."/>
            <person name="Kana A."/>
            <person name="Kay M."/>
            <person name="Kimberley A.M."/>
            <person name="Kershaw J.K."/>
            <person name="Kokkinaki M."/>
            <person name="Laird G.K."/>
            <person name="Lawlor S."/>
            <person name="Lee H.M."/>
            <person name="Leongamornlert D.A."/>
            <person name="Laird G."/>
            <person name="Lloyd C."/>
            <person name="Lloyd D.M."/>
            <person name="Loveland J."/>
            <person name="Lovell J."/>
            <person name="McLaren S."/>
            <person name="McLay K.E."/>
            <person name="McMurray A."/>
            <person name="Mashreghi-Mohammadi M."/>
            <person name="Matthews L."/>
            <person name="Milne S."/>
            <person name="Nickerson T."/>
            <person name="Nguyen M."/>
            <person name="Overton-Larty E."/>
            <person name="Palmer S.A."/>
            <person name="Pearce A.V."/>
            <person name="Peck A.I."/>
            <person name="Pelan S."/>
            <person name="Phillimore B."/>
            <person name="Porter K."/>
            <person name="Rice C.M."/>
            <person name="Rogosin A."/>
            <person name="Ross M.T."/>
            <person name="Sarafidou T."/>
            <person name="Sehra H.K."/>
            <person name="Shownkeen R."/>
            <person name="Skuce C.D."/>
            <person name="Smith M."/>
            <person name="Standring L."/>
            <person name="Sycamore N."/>
            <person name="Tester J."/>
            <person name="Thorpe A."/>
            <person name="Torcasso W."/>
            <person name="Tracey A."/>
            <person name="Tromans A."/>
            <person name="Tsolas J."/>
            <person name="Wall M."/>
            <person name="Walsh J."/>
            <person name="Wang H."/>
            <person name="Weinstock K."/>
            <person name="West A.P."/>
            <person name="Willey D.L."/>
            <person name="Whitehead S.L."/>
            <person name="Wilming L."/>
            <person name="Wray P.W."/>
            <person name="Young L."/>
            <person name="Chen Y."/>
            <person name="Lovering R.C."/>
            <person name="Moschonas N.K."/>
            <person name="Siebert R."/>
            <person name="Fechtel K."/>
            <person name="Bentley D."/>
            <person name="Durbin R.M."/>
            <person name="Hubbard T."/>
            <person name="Doucette-Stamm L."/>
            <person name="Beck S."/>
            <person name="Smith D.R."/>
            <person name="Rogers J."/>
        </authorList>
    </citation>
    <scope>NUCLEOTIDE SEQUENCE [LARGE SCALE GENOMIC DNA]</scope>
</reference>
<reference key="5">
    <citation type="submission" date="2005-09" db="EMBL/GenBank/DDBJ databases">
        <authorList>
            <person name="Mural R.J."/>
            <person name="Istrail S."/>
            <person name="Sutton G.G."/>
            <person name="Florea L."/>
            <person name="Halpern A.L."/>
            <person name="Mobarry C.M."/>
            <person name="Lippert R."/>
            <person name="Walenz B."/>
            <person name="Shatkay H."/>
            <person name="Dew I."/>
            <person name="Miller J.R."/>
            <person name="Flanigan M.J."/>
            <person name="Edwards N.J."/>
            <person name="Bolanos R."/>
            <person name="Fasulo D."/>
            <person name="Halldorsson B.V."/>
            <person name="Hannenhalli S."/>
            <person name="Turner R."/>
            <person name="Yooseph S."/>
            <person name="Lu F."/>
            <person name="Nusskern D.R."/>
            <person name="Shue B.C."/>
            <person name="Zheng X.H."/>
            <person name="Zhong F."/>
            <person name="Delcher A.L."/>
            <person name="Huson D.H."/>
            <person name="Kravitz S.A."/>
            <person name="Mouchard L."/>
            <person name="Reinert K."/>
            <person name="Remington K.A."/>
            <person name="Clark A.G."/>
            <person name="Waterman M.S."/>
            <person name="Eichler E.E."/>
            <person name="Adams M.D."/>
            <person name="Hunkapiller M.W."/>
            <person name="Myers E.W."/>
            <person name="Venter J.C."/>
        </authorList>
    </citation>
    <scope>NUCLEOTIDE SEQUENCE [LARGE SCALE GENOMIC DNA]</scope>
</reference>
<reference key="6">
    <citation type="journal article" date="1993" name="Nat. Genet.">
        <title>Chromosomal localization of seven PAX genes and cloning of a novel family member, PAX-9.</title>
        <authorList>
            <person name="Stapleton P."/>
            <person name="Weith A."/>
            <person name="Urbanek P."/>
            <person name="Kozmik Z."/>
            <person name="Busslinger M."/>
        </authorList>
    </citation>
    <scope>NUCLEOTIDE SEQUENCE [GENOMIC DNA] OF 1-136</scope>
</reference>
<reference key="7">
    <citation type="journal article" date="2009" name="Sci. Signal.">
        <title>Quantitative phosphoproteomic analysis of T cell receptor signaling reveals system-wide modulation of protein-protein interactions.</title>
        <authorList>
            <person name="Mayya V."/>
            <person name="Lundgren D.H."/>
            <person name="Hwang S.-I."/>
            <person name="Rezaul K."/>
            <person name="Wu L."/>
            <person name="Eng J.K."/>
            <person name="Rodionov V."/>
            <person name="Han D.K."/>
        </authorList>
    </citation>
    <scope>PHOSPHORYLATION [LARGE SCALE ANALYSIS] AT THR-226</scope>
    <scope>IDENTIFICATION BY MASS SPECTROMETRY [LARGE SCALE ANALYSIS]</scope>
    <source>
        <tissue>Leukemic T-cell</tissue>
    </source>
</reference>
<reference key="8">
    <citation type="journal article" date="2011" name="Biochem. Biophys. Res. Commun.">
        <title>Prolyl hydroxylase domain protein 3 targets Pax2 for destruction.</title>
        <authorList>
            <person name="Yan B."/>
            <person name="Jiao S."/>
            <person name="Zhang H.S."/>
            <person name="Lv D.D."/>
            <person name="Xue J."/>
            <person name="Fan L."/>
            <person name="Wu G.H."/>
            <person name="Fang J."/>
        </authorList>
    </citation>
    <scope>INTERACTION WITH EGLN3</scope>
</reference>
<reference key="9">
    <citation type="journal article" date="2011" name="Pediatr. Nephrol.">
        <title>HNF1B and PAX2 mutations are a common cause of renal hypodysplasia in the CKiD cohort.</title>
        <authorList>
            <person name="Thomas R."/>
            <person name="Sanna-Cherchi S."/>
            <person name="Warady B.A."/>
            <person name="Furth S.L."/>
            <person name="Kaskel F.J."/>
            <person name="Gharavi A.G."/>
        </authorList>
    </citation>
    <scope>INVOLVEMENT IN RENAL HYPODYSPLASIA</scope>
    <scope>VARIANT GLU-24</scope>
</reference>
<reference key="10">
    <citation type="journal article" date="1998" name="Hum. Genet.">
        <title>Missense mutation and hexanucleotide duplication in the PAX2 gene in two unrelated families with renal-coloboma syndrome (MIM 120330).</title>
        <authorList>
            <person name="Devriendt K."/>
            <person name="Matthijs G."/>
            <person name="van Damme B."/>
            <person name="van Caesbroeck D."/>
            <person name="Eccles M.R."/>
            <person name="Vanrenterghem Y."/>
            <person name="Fryns J.-P."/>
            <person name="Leys A."/>
        </authorList>
    </citation>
    <scope>VARIANTS PAPRS GLU-THR-75 INS AND SER-76</scope>
</reference>
<reference key="11">
    <citation type="journal article" date="2001" name="Hum. Mutat.">
        <title>Identification of two novel polymorphisms (g.903C&gt;T and g.1544C&gt;T) in the PAX2 gene.</title>
        <authorList>
            <person name="Gelb A.C."/>
            <person name="Manligas G.S."/>
            <person name="Gharaybeh S."/>
            <person name="Schimmenti L.A."/>
        </authorList>
    </citation>
    <scope>VARIANT VAL-334</scope>
</reference>
<reference key="12">
    <citation type="journal article" date="2001" name="Kidney Int.">
        <title>PAX2 mutations in oligomeganephronia.</title>
        <authorList>
            <person name="Salomon R."/>
            <person name="Tellier A.-L."/>
            <person name="Attie-Bitach T."/>
            <person name="Amiel J."/>
            <person name="Vekemans M."/>
            <person name="Lyonnet S."/>
            <person name="Dureau P."/>
            <person name="Niaudet P."/>
            <person name="Gubler M.-C."/>
            <person name="Broyer M."/>
        </authorList>
    </citation>
    <scope>VARIANT PAPRS 39-GLN-ARG-40 DEL</scope>
</reference>
<reference key="13">
    <citation type="journal article" date="2005" name="Am. J. Ophthalmol.">
        <title>Macular abnormalities and optic disk anomaly associated with a new PAX2 missense mutation.</title>
        <authorList>
            <person name="Higashide T."/>
            <person name="Wada T."/>
            <person name="Sakurai M."/>
            <person name="Yokoyama H."/>
            <person name="Sugiyama K."/>
        </authorList>
    </citation>
    <scope>VARIANT PAPRS THR-71</scope>
</reference>
<reference key="14">
    <citation type="journal article" date="2009" name="Clin. Nephrol.">
        <title>A case of renal-coloboma syndrome associated with mental developmental delay exhibiting a novel PAX2 gene mutation.</title>
        <authorList>
            <person name="Miyazawa T."/>
            <person name="Nakano M."/>
            <person name="Takemura Y."/>
            <person name="Miyazaki K."/>
            <person name="Yanagida H."/>
            <person name="Fujita S."/>
            <person name="Sugimoto K."/>
            <person name="Okada M."/>
            <person name="Takemura T."/>
        </authorList>
    </citation>
    <scope>VARIANT PAPRS HIS-130</scope>
</reference>
<reference key="15">
    <citation type="journal article" date="2012" name="Hum. Mutat.">
        <title>Update of PAX2 mutations in renal coloboma syndrome and establishment of a locus-specific database.</title>
        <authorList>
            <person name="Bower M."/>
            <person name="Salomon R."/>
            <person name="Allanson J."/>
            <person name="Antignac C."/>
            <person name="Benedicenti F."/>
            <person name="Benetti E."/>
            <person name="Binenbaum G."/>
            <person name="Jensen U.B."/>
            <person name="Cochat P."/>
            <person name="DeCramer S."/>
            <person name="Dixon J."/>
            <person name="Drouin R."/>
            <person name="Falk M.J."/>
            <person name="Feret H."/>
            <person name="Gise R."/>
            <person name="Hunter A."/>
            <person name="Johnson K."/>
            <person name="Kumar R."/>
            <person name="Lavocat M.P."/>
            <person name="Martin L."/>
            <person name="Moriniere V."/>
            <person name="Mowat D."/>
            <person name="Murer L."/>
            <person name="Nguyen H.T."/>
            <person name="Peretz-Amit G."/>
            <person name="Pierce E."/>
            <person name="Place E."/>
            <person name="Rodig N."/>
            <person name="Salerno A."/>
            <person name="Sastry S."/>
            <person name="Sato T."/>
            <person name="Sayer J.A."/>
            <person name="Schaafsma G.C."/>
            <person name="Shoemaker L."/>
            <person name="Stockton D.W."/>
            <person name="Tan W.H."/>
            <person name="Tenconi R."/>
            <person name="Vanhille P."/>
            <person name="Vats A."/>
            <person name="Wang X."/>
            <person name="Warman B."/>
            <person name="Weleber R.G."/>
            <person name="White S.M."/>
            <person name="Wilson-Brackett C."/>
            <person name="Zand D.J."/>
            <person name="Eccles M."/>
            <person name="Schimmenti L.A."/>
            <person name="Heidet L."/>
        </authorList>
    </citation>
    <scope>VARIANTS PAPRS VAL-25; ARG-33; ILE-61; ASN-61; 62-HIS--SER-66 DEL; PRO-69; THR-75 INS; SER-84; SER-ILE-LYS-PRO-GLY-VAL-ILE-GLY-84 INS; PRO-117 AND SER-130</scope>
    <scope>VARIANTS THR-160; ASN-164; THR-175; VAL-334 AND ASN-387</scope>
</reference>
<reference key="16">
    <citation type="journal article" date="2014" name="J. Am. Soc. Nephrol.">
        <title>Mutations in PAX2 associate with adult-onset FSGS.</title>
        <authorList>
            <person name="Barua M."/>
            <person name="Stellacci E."/>
            <person name="Stella L."/>
            <person name="Weins A."/>
            <person name="Genovese G."/>
            <person name="Muto V."/>
            <person name="Caputo V."/>
            <person name="Toka H.R."/>
            <person name="Charoonratana V.T."/>
            <person name="Tartaglia M."/>
            <person name="Pollak M.R."/>
        </authorList>
    </citation>
    <scope>INVOLVEMENT IN FSGS7</scope>
    <scope>VARIANTS FSGS7 GLN-56; LEU-80; PHE-133; ALA-150; ASN-164 AND ARG-189</scope>
    <scope>CHARACTERIZATION OF VARIANTS FSGS7 GLN-56; LEU-80; PHE-133 AND ARG-189</scope>
    <scope>VARIANTS PAPRS GLY-2; VAL-139; VAL-295; PRO-296; SER-298 AND ALA-329</scope>
    <scope>INTERACTION WITH TLE4</scope>
    <scope>FUNCTION</scope>
</reference>